<reference key="1">
    <citation type="journal article" date="2008" name="Genome Res.">
        <title>Insights from the complete genome sequence of Mycobacterium marinum on the evolution of Mycobacterium tuberculosis.</title>
        <authorList>
            <person name="Stinear T.P."/>
            <person name="Seemann T."/>
            <person name="Harrison P.F."/>
            <person name="Jenkin G.A."/>
            <person name="Davies J.K."/>
            <person name="Johnson P.D."/>
            <person name="Abdellah Z."/>
            <person name="Arrowsmith C."/>
            <person name="Chillingworth T."/>
            <person name="Churcher C."/>
            <person name="Clarke K."/>
            <person name="Cronin A."/>
            <person name="Davis P."/>
            <person name="Goodhead I."/>
            <person name="Holroyd N."/>
            <person name="Jagels K."/>
            <person name="Lord A."/>
            <person name="Moule S."/>
            <person name="Mungall K."/>
            <person name="Norbertczak H."/>
            <person name="Quail M.A."/>
            <person name="Rabbinowitsch E."/>
            <person name="Walker D."/>
            <person name="White B."/>
            <person name="Whitehead S."/>
            <person name="Small P.L."/>
            <person name="Brosch R."/>
            <person name="Ramakrishnan L."/>
            <person name="Fischbach M.A."/>
            <person name="Parkhill J."/>
            <person name="Cole S.T."/>
        </authorList>
    </citation>
    <scope>NUCLEOTIDE SEQUENCE [LARGE SCALE GENOMIC DNA]</scope>
    <source>
        <strain>ATCC BAA-535 / M</strain>
    </source>
</reference>
<organism>
    <name type="scientific">Mycobacterium marinum (strain ATCC BAA-535 / M)</name>
    <dbReference type="NCBI Taxonomy" id="216594"/>
    <lineage>
        <taxon>Bacteria</taxon>
        <taxon>Bacillati</taxon>
        <taxon>Actinomycetota</taxon>
        <taxon>Actinomycetes</taxon>
        <taxon>Mycobacteriales</taxon>
        <taxon>Mycobacteriaceae</taxon>
        <taxon>Mycobacterium</taxon>
        <taxon>Mycobacterium ulcerans group</taxon>
    </lineage>
</organism>
<evidence type="ECO:0000255" key="1">
    <source>
        <dbReference type="HAMAP-Rule" id="MF_01615"/>
    </source>
</evidence>
<proteinExistence type="inferred from homology"/>
<dbReference type="EC" id="4.3.3.6" evidence="1"/>
<dbReference type="EC" id="3.5.1.2" evidence="1"/>
<dbReference type="EMBL" id="CP000854">
    <property type="protein sequence ID" value="ACC40546.1"/>
    <property type="molecule type" value="Genomic_DNA"/>
</dbReference>
<dbReference type="RefSeq" id="WP_011741064.1">
    <property type="nucleotide sequence ID" value="NC_010612.1"/>
</dbReference>
<dbReference type="SMR" id="B2HN48"/>
<dbReference type="STRING" id="216594.MMAR_2096"/>
<dbReference type="MEROPS" id="C26.A32"/>
<dbReference type="GeneID" id="93437661"/>
<dbReference type="KEGG" id="mmi:MMAR_2096"/>
<dbReference type="eggNOG" id="COG0311">
    <property type="taxonomic scope" value="Bacteria"/>
</dbReference>
<dbReference type="HOGENOM" id="CLU_069674_2_0_11"/>
<dbReference type="OrthoDB" id="9810320at2"/>
<dbReference type="UniPathway" id="UPA00245"/>
<dbReference type="Proteomes" id="UP000001190">
    <property type="component" value="Chromosome"/>
</dbReference>
<dbReference type="GO" id="GO:0005829">
    <property type="term" value="C:cytosol"/>
    <property type="evidence" value="ECO:0007669"/>
    <property type="project" value="TreeGrafter"/>
</dbReference>
<dbReference type="GO" id="GO:1903600">
    <property type="term" value="C:glutaminase complex"/>
    <property type="evidence" value="ECO:0007669"/>
    <property type="project" value="TreeGrafter"/>
</dbReference>
<dbReference type="GO" id="GO:0004359">
    <property type="term" value="F:glutaminase activity"/>
    <property type="evidence" value="ECO:0007669"/>
    <property type="project" value="UniProtKB-UniRule"/>
</dbReference>
<dbReference type="GO" id="GO:0036381">
    <property type="term" value="F:pyridoxal 5'-phosphate synthase (glutamine hydrolysing) activity"/>
    <property type="evidence" value="ECO:0007669"/>
    <property type="project" value="UniProtKB-UniRule"/>
</dbReference>
<dbReference type="GO" id="GO:0006543">
    <property type="term" value="P:glutamine catabolic process"/>
    <property type="evidence" value="ECO:0007669"/>
    <property type="project" value="UniProtKB-UniRule"/>
</dbReference>
<dbReference type="GO" id="GO:0042823">
    <property type="term" value="P:pyridoxal phosphate biosynthetic process"/>
    <property type="evidence" value="ECO:0007669"/>
    <property type="project" value="UniProtKB-UniRule"/>
</dbReference>
<dbReference type="GO" id="GO:0008614">
    <property type="term" value="P:pyridoxine metabolic process"/>
    <property type="evidence" value="ECO:0007669"/>
    <property type="project" value="TreeGrafter"/>
</dbReference>
<dbReference type="CDD" id="cd01749">
    <property type="entry name" value="GATase1_PB"/>
    <property type="match status" value="1"/>
</dbReference>
<dbReference type="FunFam" id="3.40.50.880:FF:000010">
    <property type="entry name" value="uncharacterized protein LOC100176842 isoform X2"/>
    <property type="match status" value="1"/>
</dbReference>
<dbReference type="Gene3D" id="3.40.50.880">
    <property type="match status" value="1"/>
</dbReference>
<dbReference type="HAMAP" id="MF_01615">
    <property type="entry name" value="PdxT"/>
    <property type="match status" value="1"/>
</dbReference>
<dbReference type="InterPro" id="IPR029062">
    <property type="entry name" value="Class_I_gatase-like"/>
</dbReference>
<dbReference type="InterPro" id="IPR002161">
    <property type="entry name" value="PdxT/SNO"/>
</dbReference>
<dbReference type="InterPro" id="IPR021196">
    <property type="entry name" value="PdxT/SNO_CS"/>
</dbReference>
<dbReference type="NCBIfam" id="TIGR03800">
    <property type="entry name" value="PLP_synth_Pdx2"/>
    <property type="match status" value="1"/>
</dbReference>
<dbReference type="PANTHER" id="PTHR31559">
    <property type="entry name" value="PYRIDOXAL 5'-PHOSPHATE SYNTHASE SUBUNIT SNO"/>
    <property type="match status" value="1"/>
</dbReference>
<dbReference type="PANTHER" id="PTHR31559:SF0">
    <property type="entry name" value="PYRIDOXAL 5'-PHOSPHATE SYNTHASE SUBUNIT SNO1-RELATED"/>
    <property type="match status" value="1"/>
</dbReference>
<dbReference type="Pfam" id="PF01174">
    <property type="entry name" value="SNO"/>
    <property type="match status" value="1"/>
</dbReference>
<dbReference type="PIRSF" id="PIRSF005639">
    <property type="entry name" value="Glut_amidoT_SNO"/>
    <property type="match status" value="1"/>
</dbReference>
<dbReference type="SUPFAM" id="SSF52317">
    <property type="entry name" value="Class I glutamine amidotransferase-like"/>
    <property type="match status" value="1"/>
</dbReference>
<dbReference type="PROSITE" id="PS01236">
    <property type="entry name" value="PDXT_SNO_1"/>
    <property type="match status" value="1"/>
</dbReference>
<dbReference type="PROSITE" id="PS51130">
    <property type="entry name" value="PDXT_SNO_2"/>
    <property type="match status" value="1"/>
</dbReference>
<name>PDXT_MYCMM</name>
<sequence>MSIPRVGVLALQGDTREHLAALGEAGAEPMTVRRRSELDAVDGLVIPGGESTTISHLLCGFDLLEPLRARLAAGLPAYGACAGMIMLASEILDAGVRGRQALPLRGIDMTVRRNAFGRQVDSFEGDIAFTGLDHPVRAVFIRAPWVERVGAGVTVLARAGDHIVAVREGSVLATAFHPEVTGDRSIHRLFVDIVNGKA</sequence>
<comment type="function">
    <text evidence="1">Catalyzes the hydrolysis of glutamine to glutamate and ammonia as part of the biosynthesis of pyridoxal 5'-phosphate. The resulting ammonia molecule is channeled to the active site of PdxS.</text>
</comment>
<comment type="catalytic activity">
    <reaction evidence="1">
        <text>aldehydo-D-ribose 5-phosphate + D-glyceraldehyde 3-phosphate + L-glutamine = pyridoxal 5'-phosphate + L-glutamate + phosphate + 3 H2O + H(+)</text>
        <dbReference type="Rhea" id="RHEA:31507"/>
        <dbReference type="ChEBI" id="CHEBI:15377"/>
        <dbReference type="ChEBI" id="CHEBI:15378"/>
        <dbReference type="ChEBI" id="CHEBI:29985"/>
        <dbReference type="ChEBI" id="CHEBI:43474"/>
        <dbReference type="ChEBI" id="CHEBI:58273"/>
        <dbReference type="ChEBI" id="CHEBI:58359"/>
        <dbReference type="ChEBI" id="CHEBI:59776"/>
        <dbReference type="ChEBI" id="CHEBI:597326"/>
        <dbReference type="EC" id="4.3.3.6"/>
    </reaction>
</comment>
<comment type="catalytic activity">
    <reaction evidence="1">
        <text>L-glutamine + H2O = L-glutamate + NH4(+)</text>
        <dbReference type="Rhea" id="RHEA:15889"/>
        <dbReference type="ChEBI" id="CHEBI:15377"/>
        <dbReference type="ChEBI" id="CHEBI:28938"/>
        <dbReference type="ChEBI" id="CHEBI:29985"/>
        <dbReference type="ChEBI" id="CHEBI:58359"/>
        <dbReference type="EC" id="3.5.1.2"/>
    </reaction>
</comment>
<comment type="pathway">
    <text evidence="1">Cofactor biosynthesis; pyridoxal 5'-phosphate biosynthesis.</text>
</comment>
<comment type="subunit">
    <text evidence="1">In the presence of PdxS, forms a dodecamer of heterodimers. Only shows activity in the heterodimer.</text>
</comment>
<comment type="similarity">
    <text evidence="1">Belongs to the glutaminase PdxT/SNO family.</text>
</comment>
<accession>B2HN48</accession>
<protein>
    <recommendedName>
        <fullName evidence="1">Pyridoxal 5'-phosphate synthase subunit PdxT</fullName>
        <ecNumber evidence="1">4.3.3.6</ecNumber>
    </recommendedName>
    <alternativeName>
        <fullName evidence="1">Pdx2</fullName>
    </alternativeName>
    <alternativeName>
        <fullName evidence="1">Pyridoxal 5'-phosphate synthase glutaminase subunit</fullName>
        <ecNumber evidence="1">3.5.1.2</ecNumber>
    </alternativeName>
</protein>
<gene>
    <name evidence="1" type="primary">pdxT</name>
    <name type="ordered locus">MMAR_2096</name>
</gene>
<feature type="chain" id="PRO_1000185896" description="Pyridoxal 5'-phosphate synthase subunit PdxT">
    <location>
        <begin position="1"/>
        <end position="198"/>
    </location>
</feature>
<feature type="active site" description="Nucleophile" evidence="1">
    <location>
        <position position="81"/>
    </location>
</feature>
<feature type="active site" description="Charge relay system" evidence="1">
    <location>
        <position position="177"/>
    </location>
</feature>
<feature type="active site" description="Charge relay system" evidence="1">
    <location>
        <position position="179"/>
    </location>
</feature>
<feature type="binding site" evidence="1">
    <location>
        <begin position="49"/>
        <end position="51"/>
    </location>
    <ligand>
        <name>L-glutamine</name>
        <dbReference type="ChEBI" id="CHEBI:58359"/>
    </ligand>
</feature>
<feature type="binding site" evidence="1">
    <location>
        <position position="113"/>
    </location>
    <ligand>
        <name>L-glutamine</name>
        <dbReference type="ChEBI" id="CHEBI:58359"/>
    </ligand>
</feature>
<feature type="binding site" evidence="1">
    <location>
        <begin position="141"/>
        <end position="142"/>
    </location>
    <ligand>
        <name>L-glutamine</name>
        <dbReference type="ChEBI" id="CHEBI:58359"/>
    </ligand>
</feature>
<keyword id="KW-0315">Glutamine amidotransferase</keyword>
<keyword id="KW-0378">Hydrolase</keyword>
<keyword id="KW-0456">Lyase</keyword>
<keyword id="KW-0663">Pyridoxal phosphate</keyword>
<keyword id="KW-1185">Reference proteome</keyword>